<name>SPEE_ECOL5</name>
<comment type="function">
    <text evidence="1">Catalyzes the irreversible transfer of a propylamine group from the amino donor S-adenosylmethioninamine (decarboxy-AdoMet) to putrescine (1,4-diaminobutane) to yield spermidine.</text>
</comment>
<comment type="catalytic activity">
    <reaction evidence="1">
        <text>S-adenosyl 3-(methylsulfanyl)propylamine + putrescine = S-methyl-5'-thioadenosine + spermidine + H(+)</text>
        <dbReference type="Rhea" id="RHEA:12721"/>
        <dbReference type="ChEBI" id="CHEBI:15378"/>
        <dbReference type="ChEBI" id="CHEBI:17509"/>
        <dbReference type="ChEBI" id="CHEBI:57443"/>
        <dbReference type="ChEBI" id="CHEBI:57834"/>
        <dbReference type="ChEBI" id="CHEBI:326268"/>
        <dbReference type="EC" id="2.5.1.16"/>
    </reaction>
</comment>
<comment type="pathway">
    <text evidence="1">Amine and polyamine biosynthesis; spermidine biosynthesis; spermidine from putrescine: step 1/1.</text>
</comment>
<comment type="subunit">
    <text evidence="1">Homodimer or homotetramer.</text>
</comment>
<comment type="subcellular location">
    <subcellularLocation>
        <location evidence="1">Cytoplasm</location>
    </subcellularLocation>
</comment>
<comment type="similarity">
    <text evidence="1">Belongs to the spermidine/spermine synthase family.</text>
</comment>
<feature type="chain" id="PRO_1000011998" description="Polyamine aminopropyltransferase">
    <location>
        <begin position="1"/>
        <end position="288"/>
    </location>
</feature>
<feature type="domain" description="PABS" evidence="1">
    <location>
        <begin position="9"/>
        <end position="238"/>
    </location>
</feature>
<feature type="active site" description="Proton acceptor" evidence="1">
    <location>
        <position position="158"/>
    </location>
</feature>
<feature type="binding site" evidence="1">
    <location>
        <position position="33"/>
    </location>
    <ligand>
        <name>S-methyl-5'-thioadenosine</name>
        <dbReference type="ChEBI" id="CHEBI:17509"/>
    </ligand>
</feature>
<feature type="binding site" evidence="1">
    <location>
        <position position="64"/>
    </location>
    <ligand>
        <name>spermidine</name>
        <dbReference type="ChEBI" id="CHEBI:57834"/>
    </ligand>
</feature>
<feature type="binding site" evidence="1">
    <location>
        <position position="88"/>
    </location>
    <ligand>
        <name>spermidine</name>
        <dbReference type="ChEBI" id="CHEBI:57834"/>
    </ligand>
</feature>
<feature type="binding site" evidence="1">
    <location>
        <position position="108"/>
    </location>
    <ligand>
        <name>S-methyl-5'-thioadenosine</name>
        <dbReference type="ChEBI" id="CHEBI:17509"/>
    </ligand>
</feature>
<feature type="binding site" evidence="1">
    <location>
        <begin position="140"/>
        <end position="141"/>
    </location>
    <ligand>
        <name>S-methyl-5'-thioadenosine</name>
        <dbReference type="ChEBI" id="CHEBI:17509"/>
    </ligand>
</feature>
<feature type="binding site" evidence="1">
    <location>
        <begin position="158"/>
        <end position="161"/>
    </location>
    <ligand>
        <name>spermidine</name>
        <dbReference type="ChEBI" id="CHEBI:57834"/>
    </ligand>
</feature>
<feature type="binding site" evidence="1">
    <location>
        <position position="165"/>
    </location>
    <ligand>
        <name>S-methyl-5'-thioadenosine</name>
        <dbReference type="ChEBI" id="CHEBI:17509"/>
    </ligand>
</feature>
<organism>
    <name type="scientific">Escherichia coli O6:K15:H31 (strain 536 / UPEC)</name>
    <dbReference type="NCBI Taxonomy" id="362663"/>
    <lineage>
        <taxon>Bacteria</taxon>
        <taxon>Pseudomonadati</taxon>
        <taxon>Pseudomonadota</taxon>
        <taxon>Gammaproteobacteria</taxon>
        <taxon>Enterobacterales</taxon>
        <taxon>Enterobacteriaceae</taxon>
        <taxon>Escherichia</taxon>
    </lineage>
</organism>
<accession>Q0TLL3</accession>
<reference key="1">
    <citation type="journal article" date="2006" name="Mol. Microbiol.">
        <title>Role of pathogenicity island-associated integrases in the genome plasticity of uropathogenic Escherichia coli strain 536.</title>
        <authorList>
            <person name="Hochhut B."/>
            <person name="Wilde C."/>
            <person name="Balling G."/>
            <person name="Middendorf B."/>
            <person name="Dobrindt U."/>
            <person name="Brzuszkiewicz E."/>
            <person name="Gottschalk G."/>
            <person name="Carniel E."/>
            <person name="Hacker J."/>
        </authorList>
    </citation>
    <scope>NUCLEOTIDE SEQUENCE [LARGE SCALE GENOMIC DNA]</scope>
    <source>
        <strain>536 / UPEC</strain>
    </source>
</reference>
<keyword id="KW-0963">Cytoplasm</keyword>
<keyword id="KW-0620">Polyamine biosynthesis</keyword>
<keyword id="KW-0745">Spermidine biosynthesis</keyword>
<keyword id="KW-0808">Transferase</keyword>
<evidence type="ECO:0000255" key="1">
    <source>
        <dbReference type="HAMAP-Rule" id="MF_00198"/>
    </source>
</evidence>
<gene>
    <name evidence="1" type="primary">speE</name>
    <name type="ordered locus">ECP_0128</name>
</gene>
<sequence length="288" mass="32307">MAEKKQWHETLHDQFGQYFAVDNVLYHEKTDHQDLIIFENAAFGRVMALDGVVQTTERDEFIYHEMMTHVPLLAHGHAKHVLIIGGGDGAMLREVTRHKNVESITMVEIDAGVVSFCRQYLPNHNAGSYDDPRFKLVIDDGVNFVNQTSQTFDVIISDCTDPIGPGESLFTSAFYEGCKRCLNPGGIFVAQNGVCFLQQEEAIDSHRKLSHYFSDVGFYQAAIPTYYGGIMTFAWATDNDALRHLSTEIIQARFLASGLKCRYYNPAVHTAAFALPQYLQDALASQPS</sequence>
<dbReference type="EC" id="2.5.1.16" evidence="1"/>
<dbReference type="EMBL" id="CP000247">
    <property type="protein sequence ID" value="ABG68168.1"/>
    <property type="molecule type" value="Genomic_DNA"/>
</dbReference>
<dbReference type="RefSeq" id="WP_000818414.1">
    <property type="nucleotide sequence ID" value="NC_008253.1"/>
</dbReference>
<dbReference type="SMR" id="Q0TLL3"/>
<dbReference type="KEGG" id="ecp:ECP_0128"/>
<dbReference type="HOGENOM" id="CLU_048199_0_0_6"/>
<dbReference type="UniPathway" id="UPA00248">
    <property type="reaction ID" value="UER00314"/>
</dbReference>
<dbReference type="Proteomes" id="UP000009182">
    <property type="component" value="Chromosome"/>
</dbReference>
<dbReference type="GO" id="GO:0005829">
    <property type="term" value="C:cytosol"/>
    <property type="evidence" value="ECO:0007669"/>
    <property type="project" value="TreeGrafter"/>
</dbReference>
<dbReference type="GO" id="GO:0004766">
    <property type="term" value="F:spermidine synthase activity"/>
    <property type="evidence" value="ECO:0007669"/>
    <property type="project" value="UniProtKB-UniRule"/>
</dbReference>
<dbReference type="GO" id="GO:0008295">
    <property type="term" value="P:spermidine biosynthetic process"/>
    <property type="evidence" value="ECO:0007669"/>
    <property type="project" value="UniProtKB-UniRule"/>
</dbReference>
<dbReference type="CDD" id="cd02440">
    <property type="entry name" value="AdoMet_MTases"/>
    <property type="match status" value="1"/>
</dbReference>
<dbReference type="FunFam" id="2.30.140.10:FF:000002">
    <property type="entry name" value="Polyamine aminopropyltransferase"/>
    <property type="match status" value="1"/>
</dbReference>
<dbReference type="FunFam" id="3.40.50.150:FF:000026">
    <property type="entry name" value="Polyamine aminopropyltransferase"/>
    <property type="match status" value="1"/>
</dbReference>
<dbReference type="Gene3D" id="2.30.140.10">
    <property type="entry name" value="Spermidine synthase, tetramerisation domain"/>
    <property type="match status" value="1"/>
</dbReference>
<dbReference type="Gene3D" id="3.40.50.150">
    <property type="entry name" value="Vaccinia Virus protein VP39"/>
    <property type="match status" value="1"/>
</dbReference>
<dbReference type="HAMAP" id="MF_00198">
    <property type="entry name" value="Spermidine_synth"/>
    <property type="match status" value="1"/>
</dbReference>
<dbReference type="InterPro" id="IPR030374">
    <property type="entry name" value="PABS"/>
</dbReference>
<dbReference type="InterPro" id="IPR030373">
    <property type="entry name" value="PABS_CS"/>
</dbReference>
<dbReference type="InterPro" id="IPR029063">
    <property type="entry name" value="SAM-dependent_MTases_sf"/>
</dbReference>
<dbReference type="InterPro" id="IPR001045">
    <property type="entry name" value="Spermi_synthase"/>
</dbReference>
<dbReference type="InterPro" id="IPR035246">
    <property type="entry name" value="Spermidine_synt_N"/>
</dbReference>
<dbReference type="InterPro" id="IPR037163">
    <property type="entry name" value="Spermidine_synt_N_sf"/>
</dbReference>
<dbReference type="NCBIfam" id="NF037959">
    <property type="entry name" value="MFS_SpdSyn"/>
    <property type="match status" value="1"/>
</dbReference>
<dbReference type="NCBIfam" id="NF002010">
    <property type="entry name" value="PRK00811.1"/>
    <property type="match status" value="1"/>
</dbReference>
<dbReference type="NCBIfam" id="TIGR00417">
    <property type="entry name" value="speE"/>
    <property type="match status" value="1"/>
</dbReference>
<dbReference type="PANTHER" id="PTHR11558:SF11">
    <property type="entry name" value="SPERMIDINE SYNTHASE"/>
    <property type="match status" value="1"/>
</dbReference>
<dbReference type="PANTHER" id="PTHR11558">
    <property type="entry name" value="SPERMIDINE/SPERMINE SYNTHASE"/>
    <property type="match status" value="1"/>
</dbReference>
<dbReference type="Pfam" id="PF17284">
    <property type="entry name" value="Spermine_synt_N"/>
    <property type="match status" value="1"/>
</dbReference>
<dbReference type="Pfam" id="PF01564">
    <property type="entry name" value="Spermine_synth"/>
    <property type="match status" value="1"/>
</dbReference>
<dbReference type="SUPFAM" id="SSF53335">
    <property type="entry name" value="S-adenosyl-L-methionine-dependent methyltransferases"/>
    <property type="match status" value="1"/>
</dbReference>
<dbReference type="PROSITE" id="PS01330">
    <property type="entry name" value="PABS_1"/>
    <property type="match status" value="1"/>
</dbReference>
<dbReference type="PROSITE" id="PS51006">
    <property type="entry name" value="PABS_2"/>
    <property type="match status" value="1"/>
</dbReference>
<proteinExistence type="inferred from homology"/>
<protein>
    <recommendedName>
        <fullName evidence="1">Polyamine aminopropyltransferase</fullName>
    </recommendedName>
    <alternativeName>
        <fullName evidence="1">Putrescine aminopropyltransferase</fullName>
        <shortName evidence="1">PAPT</shortName>
    </alternativeName>
    <alternativeName>
        <fullName evidence="1">Spermidine synthase</fullName>
        <shortName evidence="1">SPDS</shortName>
        <shortName evidence="1">SPDSY</shortName>
        <ecNumber evidence="1">2.5.1.16</ecNumber>
    </alternativeName>
</protein>